<protein>
    <recommendedName>
        <fullName>Flavin-containing monooxygenase FMO GS-OX2</fullName>
        <ecNumber evidence="2">1.14.13.237</ecNumber>
    </recommendedName>
    <alternativeName>
        <fullName>Flavin-monooxygenase glucosinolate S-oxygenase 2</fullName>
    </alternativeName>
</protein>
<proteinExistence type="evidence at protein level"/>
<gene>
    <name type="primary">FMOGS-OX2</name>
    <name type="ordered locus">At1g62540</name>
    <name type="ORF">T3P18.10</name>
</gene>
<keyword id="KW-0274">FAD</keyword>
<keyword id="KW-0285">Flavoprotein</keyword>
<keyword id="KW-0503">Monooxygenase</keyword>
<keyword id="KW-0521">NADP</keyword>
<keyword id="KW-0560">Oxidoreductase</keyword>
<keyword id="KW-1185">Reference proteome</keyword>
<sequence>MAPAQNPISSQHVVVIGAGAAGLVAARELSREGHTVVVLEREKEVGGLWIYSPKAESDPLSLDPTRSIVHSSVYESLRTNLPRECMGFTDFPFVPRFDDESRDSRRYPSHMEVLAYLQDFAREFNLEEMVRFEIEVVRVEPVNGKWRVWSKTSGGVSHDEIFDAVVVCSGHYTEPNVAHIPGIKSWPGKQIHSHNYRVPGPFENEVVVVIGNFASGADISRDIAKVAKEVHIASRASEFDTYEKLPVPRNNLWIHSEIDTAYEDGSIVFKNGKVVYADSIVYCTGYKYRFTFLETNGYMNIDENRVEHLYKHVFPPALSPGLSFVGLPSMGIQFVMFEIQSKWVAAVLSRRVTLPTEDKMMEDISAWYASLDAVGIPKRYTHKLGKIQSEYLNWVAEECGCPLVEHWRNQQIVRGYQRLVSHPETYRDEWDDNDLMEEAYEDFARKKLISFHPSHIL</sequence>
<reference key="1">
    <citation type="journal article" date="2000" name="Nature">
        <title>Sequence and analysis of chromosome 1 of the plant Arabidopsis thaliana.</title>
        <authorList>
            <person name="Theologis A."/>
            <person name="Ecker J.R."/>
            <person name="Palm C.J."/>
            <person name="Federspiel N.A."/>
            <person name="Kaul S."/>
            <person name="White O."/>
            <person name="Alonso J."/>
            <person name="Altafi H."/>
            <person name="Araujo R."/>
            <person name="Bowman C.L."/>
            <person name="Brooks S.Y."/>
            <person name="Buehler E."/>
            <person name="Chan A."/>
            <person name="Chao Q."/>
            <person name="Chen H."/>
            <person name="Cheuk R.F."/>
            <person name="Chin C.W."/>
            <person name="Chung M.K."/>
            <person name="Conn L."/>
            <person name="Conway A.B."/>
            <person name="Conway A.R."/>
            <person name="Creasy T.H."/>
            <person name="Dewar K."/>
            <person name="Dunn P."/>
            <person name="Etgu P."/>
            <person name="Feldblyum T.V."/>
            <person name="Feng J.-D."/>
            <person name="Fong B."/>
            <person name="Fujii C.Y."/>
            <person name="Gill J.E."/>
            <person name="Goldsmith A.D."/>
            <person name="Haas B."/>
            <person name="Hansen N.F."/>
            <person name="Hughes B."/>
            <person name="Huizar L."/>
            <person name="Hunter J.L."/>
            <person name="Jenkins J."/>
            <person name="Johnson-Hopson C."/>
            <person name="Khan S."/>
            <person name="Khaykin E."/>
            <person name="Kim C.J."/>
            <person name="Koo H.L."/>
            <person name="Kremenetskaia I."/>
            <person name="Kurtz D.B."/>
            <person name="Kwan A."/>
            <person name="Lam B."/>
            <person name="Langin-Hooper S."/>
            <person name="Lee A."/>
            <person name="Lee J.M."/>
            <person name="Lenz C.A."/>
            <person name="Li J.H."/>
            <person name="Li Y.-P."/>
            <person name="Lin X."/>
            <person name="Liu S.X."/>
            <person name="Liu Z.A."/>
            <person name="Luros J.S."/>
            <person name="Maiti R."/>
            <person name="Marziali A."/>
            <person name="Militscher J."/>
            <person name="Miranda M."/>
            <person name="Nguyen M."/>
            <person name="Nierman W.C."/>
            <person name="Osborne B.I."/>
            <person name="Pai G."/>
            <person name="Peterson J."/>
            <person name="Pham P.K."/>
            <person name="Rizzo M."/>
            <person name="Rooney T."/>
            <person name="Rowley D."/>
            <person name="Sakano H."/>
            <person name="Salzberg S.L."/>
            <person name="Schwartz J.R."/>
            <person name="Shinn P."/>
            <person name="Southwick A.M."/>
            <person name="Sun H."/>
            <person name="Tallon L.J."/>
            <person name="Tambunga G."/>
            <person name="Toriumi M.J."/>
            <person name="Town C.D."/>
            <person name="Utterback T."/>
            <person name="Van Aken S."/>
            <person name="Vaysberg M."/>
            <person name="Vysotskaia V.S."/>
            <person name="Walker M."/>
            <person name="Wu D."/>
            <person name="Yu G."/>
            <person name="Fraser C.M."/>
            <person name="Venter J.C."/>
            <person name="Davis R.W."/>
        </authorList>
    </citation>
    <scope>NUCLEOTIDE SEQUENCE [LARGE SCALE GENOMIC DNA]</scope>
    <source>
        <strain>cv. Columbia</strain>
    </source>
</reference>
<reference key="2">
    <citation type="journal article" date="2017" name="Plant J.">
        <title>Araport11: a complete reannotation of the Arabidopsis thaliana reference genome.</title>
        <authorList>
            <person name="Cheng C.Y."/>
            <person name="Krishnakumar V."/>
            <person name="Chan A.P."/>
            <person name="Thibaud-Nissen F."/>
            <person name="Schobel S."/>
            <person name="Town C.D."/>
        </authorList>
    </citation>
    <scope>GENOME REANNOTATION</scope>
    <source>
        <strain>cv. Columbia</strain>
    </source>
</reference>
<reference key="3">
    <citation type="journal article" date="2003" name="Science">
        <title>Empirical analysis of transcriptional activity in the Arabidopsis genome.</title>
        <authorList>
            <person name="Yamada K."/>
            <person name="Lim J."/>
            <person name="Dale J.M."/>
            <person name="Chen H."/>
            <person name="Shinn P."/>
            <person name="Palm C.J."/>
            <person name="Southwick A.M."/>
            <person name="Wu H.C."/>
            <person name="Kim C.J."/>
            <person name="Nguyen M."/>
            <person name="Pham P.K."/>
            <person name="Cheuk R.F."/>
            <person name="Karlin-Newmann G."/>
            <person name="Liu S.X."/>
            <person name="Lam B."/>
            <person name="Sakano H."/>
            <person name="Wu T."/>
            <person name="Yu G."/>
            <person name="Miranda M."/>
            <person name="Quach H.L."/>
            <person name="Tripp M."/>
            <person name="Chang C.H."/>
            <person name="Lee J.M."/>
            <person name="Toriumi M.J."/>
            <person name="Chan M.M."/>
            <person name="Tang C.C."/>
            <person name="Onodera C.S."/>
            <person name="Deng J.M."/>
            <person name="Akiyama K."/>
            <person name="Ansari Y."/>
            <person name="Arakawa T."/>
            <person name="Banh J."/>
            <person name="Banno F."/>
            <person name="Bowser L."/>
            <person name="Brooks S.Y."/>
            <person name="Carninci P."/>
            <person name="Chao Q."/>
            <person name="Choy N."/>
            <person name="Enju A."/>
            <person name="Goldsmith A.D."/>
            <person name="Gurjal M."/>
            <person name="Hansen N.F."/>
            <person name="Hayashizaki Y."/>
            <person name="Johnson-Hopson C."/>
            <person name="Hsuan V.W."/>
            <person name="Iida K."/>
            <person name="Karnes M."/>
            <person name="Khan S."/>
            <person name="Koesema E."/>
            <person name="Ishida J."/>
            <person name="Jiang P.X."/>
            <person name="Jones T."/>
            <person name="Kawai J."/>
            <person name="Kamiya A."/>
            <person name="Meyers C."/>
            <person name="Nakajima M."/>
            <person name="Narusaka M."/>
            <person name="Seki M."/>
            <person name="Sakurai T."/>
            <person name="Satou M."/>
            <person name="Tamse R."/>
            <person name="Vaysberg M."/>
            <person name="Wallender E.K."/>
            <person name="Wong C."/>
            <person name="Yamamura Y."/>
            <person name="Yuan S."/>
            <person name="Shinozaki K."/>
            <person name="Davis R.W."/>
            <person name="Theologis A."/>
            <person name="Ecker J.R."/>
        </authorList>
    </citation>
    <scope>NUCLEOTIDE SEQUENCE [LARGE SCALE MRNA]</scope>
    <source>
        <strain>cv. Columbia</strain>
    </source>
</reference>
<reference key="4">
    <citation type="journal article" date="2007" name="Plant J.">
        <title>Identification of a flavin-monooxygenase as the S-oxygenating enzyme in aliphatic glucosinolate biosynthesis in Arabidopsis.</title>
        <authorList>
            <person name="Hansen B.G."/>
            <person name="Kliebenstein D.J."/>
            <person name="Halkier B.A."/>
        </authorList>
    </citation>
    <scope>GENE FAMILY</scope>
    <source>
        <strain>cv. Columbia</strain>
    </source>
</reference>
<reference key="5">
    <citation type="journal article" date="2008" name="Plant Physiol.">
        <title>Subclade of flavin-monooxygenases involved in aliphatic glucosinolate biosynthesis.</title>
        <authorList>
            <person name="Li J."/>
            <person name="Hansen B.G."/>
            <person name="Ober J.A."/>
            <person name="Kliebenstein D.J."/>
            <person name="Halkier B.A."/>
        </authorList>
    </citation>
    <scope>FUNCTION</scope>
    <scope>CATALYTIC ACTIVITY</scope>
    <scope>DISRUPTION PHENOTYPE</scope>
    <source>
        <strain>cv. Columbia</strain>
    </source>
</reference>
<evidence type="ECO:0000255" key="1"/>
<evidence type="ECO:0000269" key="2">
    <source>
    </source>
</evidence>
<evidence type="ECO:0000305" key="3"/>
<name>GSOX2_ARATH</name>
<organism>
    <name type="scientific">Arabidopsis thaliana</name>
    <name type="common">Mouse-ear cress</name>
    <dbReference type="NCBI Taxonomy" id="3702"/>
    <lineage>
        <taxon>Eukaryota</taxon>
        <taxon>Viridiplantae</taxon>
        <taxon>Streptophyta</taxon>
        <taxon>Embryophyta</taxon>
        <taxon>Tracheophyta</taxon>
        <taxon>Spermatophyta</taxon>
        <taxon>Magnoliopsida</taxon>
        <taxon>eudicotyledons</taxon>
        <taxon>Gunneridae</taxon>
        <taxon>Pentapetalae</taxon>
        <taxon>rosids</taxon>
        <taxon>malvids</taxon>
        <taxon>Brassicales</taxon>
        <taxon>Brassicaceae</taxon>
        <taxon>Camelineae</taxon>
        <taxon>Arabidopsis</taxon>
    </lineage>
</organism>
<feature type="chain" id="PRO_0000360992" description="Flavin-containing monooxygenase FMO GS-OX2">
    <location>
        <begin position="1"/>
        <end position="457"/>
    </location>
</feature>
<feature type="binding site" evidence="1">
    <location>
        <begin position="17"/>
        <end position="22"/>
    </location>
    <ligand>
        <name>FAD</name>
        <dbReference type="ChEBI" id="CHEBI:57692"/>
    </ligand>
</feature>
<feature type="binding site" evidence="1">
    <location>
        <begin position="211"/>
        <end position="216"/>
    </location>
    <ligand>
        <name>NADP(+)</name>
        <dbReference type="ChEBI" id="CHEBI:58349"/>
    </ligand>
</feature>
<accession>Q94K43</accession>
<accession>Q9SXE3</accession>
<dbReference type="EC" id="1.14.13.237" evidence="2"/>
<dbReference type="EMBL" id="AC005698">
    <property type="protein sequence ID" value="AAD43611.1"/>
    <property type="status" value="ALT_SEQ"/>
    <property type="molecule type" value="Genomic_DNA"/>
</dbReference>
<dbReference type="EMBL" id="CP002684">
    <property type="protein sequence ID" value="AEE33977.1"/>
    <property type="molecule type" value="Genomic_DNA"/>
</dbReference>
<dbReference type="EMBL" id="AF370313">
    <property type="protein sequence ID" value="AAK44128.1"/>
    <property type="molecule type" value="mRNA"/>
</dbReference>
<dbReference type="EMBL" id="AY063099">
    <property type="protein sequence ID" value="AAL34273.1"/>
    <property type="molecule type" value="mRNA"/>
</dbReference>
<dbReference type="SMR" id="Q94K43"/>
<dbReference type="FunCoup" id="Q94K43">
    <property type="interactions" value="434"/>
</dbReference>
<dbReference type="STRING" id="3702.Q94K43"/>
<dbReference type="PaxDb" id="3702-AT1G62540.1"/>
<dbReference type="EnsemblPlants" id="AT1G62540.1">
    <property type="protein sequence ID" value="AT1G62540.1"/>
    <property type="gene ID" value="AT1G62540"/>
</dbReference>
<dbReference type="GeneID" id="842551"/>
<dbReference type="Gramene" id="AT1G62540.1">
    <property type="protein sequence ID" value="AT1G62540.1"/>
    <property type="gene ID" value="AT1G62540"/>
</dbReference>
<dbReference type="KEGG" id="ath:AT1G62540"/>
<dbReference type="Araport" id="AT1G62540"/>
<dbReference type="TAIR" id="AT1G62540">
    <property type="gene designation" value="FMO GS-OX2"/>
</dbReference>
<dbReference type="eggNOG" id="KOG1399">
    <property type="taxonomic scope" value="Eukaryota"/>
</dbReference>
<dbReference type="HOGENOM" id="CLU_006909_3_0_1"/>
<dbReference type="InParanoid" id="Q94K43"/>
<dbReference type="OMA" id="HRISGQH"/>
<dbReference type="PhylomeDB" id="Q94K43"/>
<dbReference type="BioCyc" id="MetaCyc:AT1G62540-MONOMER"/>
<dbReference type="BRENDA" id="1.14.13.237">
    <property type="organism ID" value="399"/>
</dbReference>
<dbReference type="PRO" id="PR:Q94K43"/>
<dbReference type="Proteomes" id="UP000006548">
    <property type="component" value="Chromosome 1"/>
</dbReference>
<dbReference type="ExpressionAtlas" id="Q94K43">
    <property type="expression patterns" value="baseline and differential"/>
</dbReference>
<dbReference type="GO" id="GO:0080102">
    <property type="term" value="F:3-methylthiopropyl glucosinolate S-oxygenase activity"/>
    <property type="evidence" value="ECO:0000315"/>
    <property type="project" value="TAIR"/>
</dbReference>
<dbReference type="GO" id="GO:0080103">
    <property type="term" value="F:4-methylthiopropyl glucosinolate S-oxygenase activity"/>
    <property type="evidence" value="ECO:0000314"/>
    <property type="project" value="TAIR"/>
</dbReference>
<dbReference type="GO" id="GO:0080104">
    <property type="term" value="F:5-methylthiopropyl glucosinolate S-oxygenase activity"/>
    <property type="evidence" value="ECO:0000315"/>
    <property type="project" value="TAIR"/>
</dbReference>
<dbReference type="GO" id="GO:0080106">
    <property type="term" value="F:7-methylthiopropyl glucosinolate S-oxygenase activity"/>
    <property type="evidence" value="ECO:0000315"/>
    <property type="project" value="TAIR"/>
</dbReference>
<dbReference type="GO" id="GO:0080107">
    <property type="term" value="F:8-methylthiopropyl glucosinolate S-oxygenase activity"/>
    <property type="evidence" value="ECO:0000314"/>
    <property type="project" value="TAIR"/>
</dbReference>
<dbReference type="GO" id="GO:0050660">
    <property type="term" value="F:flavin adenine dinucleotide binding"/>
    <property type="evidence" value="ECO:0007669"/>
    <property type="project" value="InterPro"/>
</dbReference>
<dbReference type="GO" id="GO:0004499">
    <property type="term" value="F:N,N-dimethylaniline monooxygenase activity"/>
    <property type="evidence" value="ECO:0000314"/>
    <property type="project" value="TAIR"/>
</dbReference>
<dbReference type="GO" id="GO:0050661">
    <property type="term" value="F:NADP binding"/>
    <property type="evidence" value="ECO:0007669"/>
    <property type="project" value="InterPro"/>
</dbReference>
<dbReference type="GO" id="GO:0019761">
    <property type="term" value="P:glucosinolate biosynthetic process"/>
    <property type="evidence" value="ECO:0000315"/>
    <property type="project" value="TAIR"/>
</dbReference>
<dbReference type="FunFam" id="3.50.50.60:FF:000099">
    <property type="entry name" value="Flavin-containing monooxygenase"/>
    <property type="match status" value="1"/>
</dbReference>
<dbReference type="Gene3D" id="3.50.50.60">
    <property type="entry name" value="FAD/NAD(P)-binding domain"/>
    <property type="match status" value="2"/>
</dbReference>
<dbReference type="InterPro" id="IPR036188">
    <property type="entry name" value="FAD/NAD-bd_sf"/>
</dbReference>
<dbReference type="InterPro" id="IPR000960">
    <property type="entry name" value="Flavin_mOase"/>
</dbReference>
<dbReference type="InterPro" id="IPR020946">
    <property type="entry name" value="Flavin_mOase-like"/>
</dbReference>
<dbReference type="InterPro" id="IPR050346">
    <property type="entry name" value="FMO-like"/>
</dbReference>
<dbReference type="PANTHER" id="PTHR23023">
    <property type="entry name" value="DIMETHYLANILINE MONOOXYGENASE"/>
    <property type="match status" value="1"/>
</dbReference>
<dbReference type="Pfam" id="PF00743">
    <property type="entry name" value="FMO-like"/>
    <property type="match status" value="2"/>
</dbReference>
<dbReference type="PIRSF" id="PIRSF000332">
    <property type="entry name" value="FMO"/>
    <property type="match status" value="1"/>
</dbReference>
<dbReference type="PRINTS" id="PR00370">
    <property type="entry name" value="FMOXYGENASE"/>
</dbReference>
<dbReference type="SUPFAM" id="SSF51905">
    <property type="entry name" value="FAD/NAD(P)-binding domain"/>
    <property type="match status" value="2"/>
</dbReference>
<comment type="function">
    <text evidence="2">Catalyzes the conversion of methylthioalkyl glucosinolates of any chain length into methylsulfinylalkyl glucosinolates.</text>
</comment>
<comment type="catalytic activity">
    <reaction evidence="2">
        <text>a (Z)-omega-(methylsulfanyl)-N-sulfo-alkylhydroximate S-glucoside + NADPH + O2 + H(+) = a (Z)-omega-(methylsulfinyl)-alkyl-glucosinolate + NADP(+) + H2O</text>
        <dbReference type="Rhea" id="RHEA:42208"/>
        <dbReference type="Rhea" id="RHEA-COMP:13194"/>
        <dbReference type="Rhea" id="RHEA-COMP:13195"/>
        <dbReference type="ChEBI" id="CHEBI:15377"/>
        <dbReference type="ChEBI" id="CHEBI:15378"/>
        <dbReference type="ChEBI" id="CHEBI:15379"/>
        <dbReference type="ChEBI" id="CHEBI:57783"/>
        <dbReference type="ChEBI" id="CHEBI:58349"/>
        <dbReference type="ChEBI" id="CHEBI:136434"/>
        <dbReference type="ChEBI" id="CHEBI:136435"/>
        <dbReference type="EC" id="1.14.13.237"/>
    </reaction>
</comment>
<comment type="disruption phenotype">
    <text evidence="2">Increased accumulation of methylthiobutyl, -pentyl, -heptyl and -octyl glucosinolates in leaves and seeds.</text>
</comment>
<comment type="similarity">
    <text evidence="3">Belongs to the FMO family.</text>
</comment>
<comment type="sequence caution" evidence="3">
    <conflict type="erroneous gene model prediction">
        <sequence resource="EMBL-CDS" id="AAD43611"/>
    </conflict>
</comment>